<keyword id="KW-0963">Cytoplasm</keyword>
<keyword id="KW-0488">Methylation</keyword>
<keyword id="KW-0648">Protein biosynthesis</keyword>
<keyword id="KW-1185">Reference proteome</keyword>
<proteinExistence type="inferred from homology"/>
<dbReference type="EMBL" id="CP001230">
    <property type="protein sequence ID" value="ACO04190.1"/>
    <property type="molecule type" value="Genomic_DNA"/>
</dbReference>
<dbReference type="RefSeq" id="WP_012676428.1">
    <property type="nucleotide sequence ID" value="NC_012440.1"/>
</dbReference>
<dbReference type="SMR" id="C0QTI3"/>
<dbReference type="STRING" id="123214.PERMA_0200"/>
<dbReference type="PaxDb" id="123214-PERMA_0200"/>
<dbReference type="KEGG" id="pmx:PERMA_0200"/>
<dbReference type="eggNOG" id="COG0216">
    <property type="taxonomic scope" value="Bacteria"/>
</dbReference>
<dbReference type="HOGENOM" id="CLU_036856_0_1_0"/>
<dbReference type="OrthoDB" id="9806673at2"/>
<dbReference type="Proteomes" id="UP000001366">
    <property type="component" value="Chromosome"/>
</dbReference>
<dbReference type="GO" id="GO:0005737">
    <property type="term" value="C:cytoplasm"/>
    <property type="evidence" value="ECO:0007669"/>
    <property type="project" value="UniProtKB-SubCell"/>
</dbReference>
<dbReference type="GO" id="GO:0016149">
    <property type="term" value="F:translation release factor activity, codon specific"/>
    <property type="evidence" value="ECO:0007669"/>
    <property type="project" value="UniProtKB-UniRule"/>
</dbReference>
<dbReference type="FunFam" id="3.30.160.20:FF:000004">
    <property type="entry name" value="Peptide chain release factor 1"/>
    <property type="match status" value="1"/>
</dbReference>
<dbReference type="FunFam" id="3.30.70.1660:FF:000002">
    <property type="entry name" value="Peptide chain release factor 1"/>
    <property type="match status" value="1"/>
</dbReference>
<dbReference type="FunFam" id="3.30.70.1660:FF:000004">
    <property type="entry name" value="Peptide chain release factor 1"/>
    <property type="match status" value="1"/>
</dbReference>
<dbReference type="Gene3D" id="3.30.160.20">
    <property type="match status" value="1"/>
</dbReference>
<dbReference type="Gene3D" id="3.30.70.1660">
    <property type="match status" value="2"/>
</dbReference>
<dbReference type="Gene3D" id="6.10.140.1950">
    <property type="match status" value="1"/>
</dbReference>
<dbReference type="HAMAP" id="MF_00093">
    <property type="entry name" value="Rel_fac_1"/>
    <property type="match status" value="1"/>
</dbReference>
<dbReference type="InterPro" id="IPR005139">
    <property type="entry name" value="PCRF"/>
</dbReference>
<dbReference type="InterPro" id="IPR000352">
    <property type="entry name" value="Pep_chain_release_fac_I"/>
</dbReference>
<dbReference type="InterPro" id="IPR045853">
    <property type="entry name" value="Pep_chain_release_fac_I_sf"/>
</dbReference>
<dbReference type="InterPro" id="IPR050057">
    <property type="entry name" value="Prokaryotic/Mito_RF"/>
</dbReference>
<dbReference type="InterPro" id="IPR004373">
    <property type="entry name" value="RF-1"/>
</dbReference>
<dbReference type="NCBIfam" id="TIGR00019">
    <property type="entry name" value="prfA"/>
    <property type="match status" value="1"/>
</dbReference>
<dbReference type="NCBIfam" id="NF001859">
    <property type="entry name" value="PRK00591.1"/>
    <property type="match status" value="1"/>
</dbReference>
<dbReference type="PANTHER" id="PTHR43804">
    <property type="entry name" value="LD18447P"/>
    <property type="match status" value="1"/>
</dbReference>
<dbReference type="PANTHER" id="PTHR43804:SF7">
    <property type="entry name" value="LD18447P"/>
    <property type="match status" value="1"/>
</dbReference>
<dbReference type="Pfam" id="PF03462">
    <property type="entry name" value="PCRF"/>
    <property type="match status" value="1"/>
</dbReference>
<dbReference type="Pfam" id="PF00472">
    <property type="entry name" value="RF-1"/>
    <property type="match status" value="1"/>
</dbReference>
<dbReference type="SMART" id="SM00937">
    <property type="entry name" value="PCRF"/>
    <property type="match status" value="1"/>
</dbReference>
<dbReference type="SUPFAM" id="SSF75620">
    <property type="entry name" value="Release factor"/>
    <property type="match status" value="1"/>
</dbReference>
<dbReference type="PROSITE" id="PS00745">
    <property type="entry name" value="RF_PROK_I"/>
    <property type="match status" value="1"/>
</dbReference>
<protein>
    <recommendedName>
        <fullName evidence="1">Peptide chain release factor 1</fullName>
        <shortName evidence="1">RF-1</shortName>
    </recommendedName>
</protein>
<reference key="1">
    <citation type="journal article" date="2009" name="J. Bacteriol.">
        <title>Complete and draft genome sequences of six members of the Aquificales.</title>
        <authorList>
            <person name="Reysenbach A.-L."/>
            <person name="Hamamura N."/>
            <person name="Podar M."/>
            <person name="Griffiths E."/>
            <person name="Ferreira S."/>
            <person name="Hochstein R."/>
            <person name="Heidelberg J."/>
            <person name="Johnson J."/>
            <person name="Mead D."/>
            <person name="Pohorille A."/>
            <person name="Sarmiento M."/>
            <person name="Schweighofer K."/>
            <person name="Seshadri R."/>
            <person name="Voytek M.A."/>
        </authorList>
    </citation>
    <scope>NUCLEOTIDE SEQUENCE [LARGE SCALE GENOMIC DNA]</scope>
    <source>
        <strain>DSM 14350 / EX-H1</strain>
    </source>
</reference>
<sequence length="361" mass="41728">MLNKYLLQKLENIDEKLKKLEAALSDPEVLKDQKKLQQVAKEHKETEKLSKLYKEYKKVLKDIEETKSLLNNPDEEMRLLAEEELKNLNQRKEELEKEIQIELLPKDPNDEKNVILEIRQGAGGEEAALFAGELFRMYQRYAERKGWKVEVLSMHPTDRGGIKEVIALIKGQGAYSRLKFESGVHRVQRVPETESSGRIHTSTATVAVLPEAEEVDIEIKPEELKIETMRASGAGGQHVNTTDSAVRITHIPTGIVVSCQDERSQLQNRAKAMQILRARLKDYYDRLEREKIEKERRMQVGTGDRSEKIRTYNFPQNRVTDHRINYTSHRLHDILDGDLDEIIDQLIAKEQEQKLLAISEE</sequence>
<accession>C0QTI3</accession>
<evidence type="ECO:0000255" key="1">
    <source>
        <dbReference type="HAMAP-Rule" id="MF_00093"/>
    </source>
</evidence>
<gene>
    <name evidence="1" type="primary">prfA</name>
    <name type="ordered locus">PERMA_0200</name>
</gene>
<organism>
    <name type="scientific">Persephonella marina (strain DSM 14350 / EX-H1)</name>
    <dbReference type="NCBI Taxonomy" id="123214"/>
    <lineage>
        <taxon>Bacteria</taxon>
        <taxon>Pseudomonadati</taxon>
        <taxon>Aquificota</taxon>
        <taxon>Aquificia</taxon>
        <taxon>Aquificales</taxon>
        <taxon>Hydrogenothermaceae</taxon>
        <taxon>Persephonella</taxon>
    </lineage>
</organism>
<name>RF1_PERMH</name>
<feature type="chain" id="PRO_1000193501" description="Peptide chain release factor 1">
    <location>
        <begin position="1"/>
        <end position="361"/>
    </location>
</feature>
<feature type="modified residue" description="N5-methylglutamine" evidence="1">
    <location>
        <position position="237"/>
    </location>
</feature>
<comment type="function">
    <text evidence="1">Peptide chain release factor 1 directs the termination of translation in response to the peptide chain termination codons UAG and UAA.</text>
</comment>
<comment type="subcellular location">
    <subcellularLocation>
        <location evidence="1">Cytoplasm</location>
    </subcellularLocation>
</comment>
<comment type="PTM">
    <text evidence="1">Methylated by PrmC. Methylation increases the termination efficiency of RF1.</text>
</comment>
<comment type="similarity">
    <text evidence="1">Belongs to the prokaryotic/mitochondrial release factor family.</text>
</comment>